<feature type="signal peptide" evidence="2">
    <location>
        <begin position="1"/>
        <end position="22"/>
    </location>
</feature>
<feature type="chain" id="PRO_0000251925" description="Follistatin-related protein 4">
    <location>
        <begin position="23"/>
        <end position="842"/>
    </location>
</feature>
<feature type="domain" description="Kazal-like" evidence="4">
    <location>
        <begin position="81"/>
        <end position="135"/>
    </location>
</feature>
<feature type="domain" description="EF-hand" evidence="3">
    <location>
        <begin position="174"/>
        <end position="209"/>
    </location>
</feature>
<feature type="domain" description="Ig-like 1">
    <location>
        <begin position="251"/>
        <end position="338"/>
    </location>
</feature>
<feature type="domain" description="Ig-like 2">
    <location>
        <begin position="341"/>
        <end position="426"/>
    </location>
</feature>
<feature type="binding site" evidence="3">
    <location>
        <position position="187"/>
    </location>
    <ligand>
        <name>Ca(2+)</name>
        <dbReference type="ChEBI" id="CHEBI:29108"/>
    </ligand>
</feature>
<feature type="binding site" evidence="3">
    <location>
        <position position="189"/>
    </location>
    <ligand>
        <name>Ca(2+)</name>
        <dbReference type="ChEBI" id="CHEBI:29108"/>
    </ligand>
</feature>
<feature type="binding site" evidence="3">
    <location>
        <position position="191"/>
    </location>
    <ligand>
        <name>Ca(2+)</name>
        <dbReference type="ChEBI" id="CHEBI:29108"/>
    </ligand>
</feature>
<feature type="binding site" evidence="3">
    <location>
        <position position="193"/>
    </location>
    <ligand>
        <name>Ca(2+)</name>
        <dbReference type="ChEBI" id="CHEBI:29108"/>
    </ligand>
</feature>
<feature type="binding site" evidence="3">
    <location>
        <position position="198"/>
    </location>
    <ligand>
        <name>Ca(2+)</name>
        <dbReference type="ChEBI" id="CHEBI:29108"/>
    </ligand>
</feature>
<feature type="glycosylation site" description="N-linked (GlcNAc...) asparagine" evidence="2">
    <location>
        <position position="318"/>
    </location>
</feature>
<feature type="disulfide bond" evidence="4">
    <location>
        <begin position="87"/>
        <end position="119"/>
    </location>
</feature>
<feature type="disulfide bond" evidence="4">
    <location>
        <begin position="93"/>
        <end position="112"/>
    </location>
</feature>
<feature type="disulfide bond" evidence="4">
    <location>
        <begin position="101"/>
        <end position="133"/>
    </location>
</feature>
<feature type="disulfide bond" evidence="1">
    <location>
        <begin position="270"/>
        <end position="321"/>
    </location>
</feature>
<feature type="disulfide bond" evidence="1">
    <location>
        <begin position="362"/>
        <end position="413"/>
    </location>
</feature>
<feature type="splice variant" id="VSP_020800" description="In isoform 2." evidence="7">
    <location>
        <begin position="78"/>
        <end position="246"/>
    </location>
</feature>
<feature type="splice variant" id="VSP_020801" description="In isoform 3." evidence="6">
    <original>TNLII</original>
    <variation>INLEQ</variation>
    <location>
        <begin position="601"/>
        <end position="605"/>
    </location>
</feature>
<feature type="splice variant" id="VSP_020802" description="In isoform 3." evidence="6">
    <location>
        <begin position="606"/>
        <end position="842"/>
    </location>
</feature>
<feature type="sequence variant" id="VAR_027727" description="In dbSNP:rs17683306.">
    <original>R</original>
    <variation>H</variation>
    <location>
        <position position="158"/>
    </location>
</feature>
<feature type="sequence variant" id="VAR_027728" description="In dbSNP:rs3749817." evidence="5">
    <original>T</original>
    <variation>M</variation>
    <location>
        <position position="757"/>
    </location>
</feature>
<feature type="sequence conflict" description="In Ref. 1; CAE45915." evidence="8" ref="1">
    <original>E</original>
    <variation>K</variation>
    <location>
        <position position="60"/>
    </location>
</feature>
<feature type="sequence conflict" description="In Ref. 3; AAH24300." evidence="8" ref="3">
    <original>M</original>
    <variation>I</variation>
    <location>
        <position position="240"/>
    </location>
</feature>
<feature type="sequence conflict" description="In Ref. 1; CAE45915." evidence="8" ref="1">
    <original>L</original>
    <variation>P</variation>
    <location>
        <position position="764"/>
    </location>
</feature>
<organism>
    <name type="scientific">Homo sapiens</name>
    <name type="common">Human</name>
    <dbReference type="NCBI Taxonomy" id="9606"/>
    <lineage>
        <taxon>Eukaryota</taxon>
        <taxon>Metazoa</taxon>
        <taxon>Chordata</taxon>
        <taxon>Craniata</taxon>
        <taxon>Vertebrata</taxon>
        <taxon>Euteleostomi</taxon>
        <taxon>Mammalia</taxon>
        <taxon>Eutheria</taxon>
        <taxon>Euarchontoglires</taxon>
        <taxon>Primates</taxon>
        <taxon>Haplorrhini</taxon>
        <taxon>Catarrhini</taxon>
        <taxon>Hominidae</taxon>
        <taxon>Homo</taxon>
    </lineage>
</organism>
<protein>
    <recommendedName>
        <fullName>Follistatin-related protein 4</fullName>
    </recommendedName>
    <alternativeName>
        <fullName>Follistatin-like protein 4</fullName>
    </alternativeName>
</protein>
<proteinExistence type="evidence at protein level"/>
<name>FSTL4_HUMAN</name>
<accession>Q6MZW2</accession>
<accession>Q8TBU0</accession>
<accession>Q9UPU1</accession>
<dbReference type="EMBL" id="BX640845">
    <property type="protein sequence ID" value="CAE45915.1"/>
    <property type="molecule type" value="mRNA"/>
</dbReference>
<dbReference type="EMBL" id="AC005195">
    <property type="status" value="NOT_ANNOTATED_CDS"/>
    <property type="molecule type" value="Genomic_DNA"/>
</dbReference>
<dbReference type="EMBL" id="AC010307">
    <property type="status" value="NOT_ANNOTATED_CDS"/>
    <property type="molecule type" value="Genomic_DNA"/>
</dbReference>
<dbReference type="EMBL" id="AC010608">
    <property type="status" value="NOT_ANNOTATED_CDS"/>
    <property type="molecule type" value="Genomic_DNA"/>
</dbReference>
<dbReference type="EMBL" id="AC012614">
    <property type="status" value="NOT_ANNOTATED_CDS"/>
    <property type="molecule type" value="Genomic_DNA"/>
</dbReference>
<dbReference type="EMBL" id="BC024300">
    <property type="protein sequence ID" value="AAH24300.1"/>
    <property type="molecule type" value="mRNA"/>
</dbReference>
<dbReference type="EMBL" id="AB028984">
    <property type="protein sequence ID" value="BAA83013.1"/>
    <property type="molecule type" value="mRNA"/>
</dbReference>
<dbReference type="CCDS" id="CCDS34238.1">
    <molecule id="Q6MZW2-1"/>
</dbReference>
<dbReference type="RefSeq" id="NP_055897.1">
    <molecule id="Q6MZW2-1"/>
    <property type="nucleotide sequence ID" value="NM_015082.2"/>
</dbReference>
<dbReference type="RefSeq" id="XP_011541585.1">
    <molecule id="Q6MZW2-1"/>
    <property type="nucleotide sequence ID" value="XM_011543283.2"/>
</dbReference>
<dbReference type="RefSeq" id="XP_054208124.1">
    <molecule id="Q6MZW2-1"/>
    <property type="nucleotide sequence ID" value="XM_054352149.1"/>
</dbReference>
<dbReference type="SMR" id="Q6MZW2"/>
<dbReference type="BioGRID" id="116730">
    <property type="interactions" value="43"/>
</dbReference>
<dbReference type="FunCoup" id="Q6MZW2">
    <property type="interactions" value="91"/>
</dbReference>
<dbReference type="IntAct" id="Q6MZW2">
    <property type="interactions" value="31"/>
</dbReference>
<dbReference type="STRING" id="9606.ENSP00000265342"/>
<dbReference type="MEROPS" id="I01.977"/>
<dbReference type="GlyCosmos" id="Q6MZW2">
    <property type="glycosylation" value="1 site, No reported glycans"/>
</dbReference>
<dbReference type="GlyGen" id="Q6MZW2">
    <property type="glycosylation" value="8 sites, 2 N-linked glycans (2 sites), 2 O-linked glycans (4 sites)"/>
</dbReference>
<dbReference type="iPTMnet" id="Q6MZW2"/>
<dbReference type="PhosphoSitePlus" id="Q6MZW2"/>
<dbReference type="BioMuta" id="FSTL4"/>
<dbReference type="DMDM" id="296439344"/>
<dbReference type="jPOST" id="Q6MZW2"/>
<dbReference type="MassIVE" id="Q6MZW2"/>
<dbReference type="PaxDb" id="9606-ENSP00000265342"/>
<dbReference type="PeptideAtlas" id="Q6MZW2"/>
<dbReference type="ProteomicsDB" id="66588">
    <molecule id="Q6MZW2-1"/>
</dbReference>
<dbReference type="ProteomicsDB" id="66589">
    <molecule id="Q6MZW2-2"/>
</dbReference>
<dbReference type="ProteomicsDB" id="66590">
    <molecule id="Q6MZW2-3"/>
</dbReference>
<dbReference type="Pumba" id="Q6MZW2"/>
<dbReference type="Antibodypedia" id="26231">
    <property type="antibodies" value="43 antibodies from 15 providers"/>
</dbReference>
<dbReference type="DNASU" id="23105"/>
<dbReference type="Ensembl" id="ENST00000265342.12">
    <molecule id="Q6MZW2-1"/>
    <property type="protein sequence ID" value="ENSP00000265342.7"/>
    <property type="gene ID" value="ENSG00000053108.18"/>
</dbReference>
<dbReference type="GeneID" id="23105"/>
<dbReference type="KEGG" id="hsa:23105"/>
<dbReference type="MANE-Select" id="ENST00000265342.12">
    <property type="protein sequence ID" value="ENSP00000265342.7"/>
    <property type="RefSeq nucleotide sequence ID" value="NM_015082.2"/>
    <property type="RefSeq protein sequence ID" value="NP_055897.1"/>
</dbReference>
<dbReference type="UCSC" id="uc003kyn.2">
    <molecule id="Q6MZW2-1"/>
    <property type="organism name" value="human"/>
</dbReference>
<dbReference type="AGR" id="HGNC:21389"/>
<dbReference type="CTD" id="23105"/>
<dbReference type="DisGeNET" id="23105"/>
<dbReference type="GeneCards" id="FSTL4"/>
<dbReference type="HGNC" id="HGNC:21389">
    <property type="gene designation" value="FSTL4"/>
</dbReference>
<dbReference type="HPA" id="ENSG00000053108">
    <property type="expression patterns" value="Low tissue specificity"/>
</dbReference>
<dbReference type="neXtProt" id="NX_Q6MZW2"/>
<dbReference type="OpenTargets" id="ENSG00000053108"/>
<dbReference type="PharmGKB" id="PA134969998"/>
<dbReference type="VEuPathDB" id="HostDB:ENSG00000053108"/>
<dbReference type="eggNOG" id="ENOG502QPNV">
    <property type="taxonomic scope" value="Eukaryota"/>
</dbReference>
<dbReference type="GeneTree" id="ENSGT00940000158076"/>
<dbReference type="HOGENOM" id="CLU_007849_0_0_1"/>
<dbReference type="InParanoid" id="Q6MZW2"/>
<dbReference type="OMA" id="RYLPVCG"/>
<dbReference type="OrthoDB" id="6085115at2759"/>
<dbReference type="PAN-GO" id="Q6MZW2">
    <property type="GO annotations" value="2 GO annotations based on evolutionary models"/>
</dbReference>
<dbReference type="PhylomeDB" id="Q6MZW2"/>
<dbReference type="TreeFam" id="TF350473"/>
<dbReference type="PathwayCommons" id="Q6MZW2"/>
<dbReference type="SignaLink" id="Q6MZW2"/>
<dbReference type="BioGRID-ORCS" id="23105">
    <property type="hits" value="8 hits in 1138 CRISPR screens"/>
</dbReference>
<dbReference type="ChiTaRS" id="FSTL4">
    <property type="organism name" value="human"/>
</dbReference>
<dbReference type="GenomeRNAi" id="23105"/>
<dbReference type="Pharos" id="Q6MZW2">
    <property type="development level" value="Tdark"/>
</dbReference>
<dbReference type="PRO" id="PR:Q6MZW2"/>
<dbReference type="Proteomes" id="UP000005640">
    <property type="component" value="Chromosome 5"/>
</dbReference>
<dbReference type="RNAct" id="Q6MZW2">
    <property type="molecule type" value="protein"/>
</dbReference>
<dbReference type="Bgee" id="ENSG00000053108">
    <property type="expression patterns" value="Expressed in oocyte and 106 other cell types or tissues"/>
</dbReference>
<dbReference type="ExpressionAtlas" id="Q6MZW2">
    <property type="expression patterns" value="baseline and differential"/>
</dbReference>
<dbReference type="GO" id="GO:0005576">
    <property type="term" value="C:extracellular region"/>
    <property type="evidence" value="ECO:0000318"/>
    <property type="project" value="GO_Central"/>
</dbReference>
<dbReference type="GO" id="GO:0030141">
    <property type="term" value="C:secretory granule"/>
    <property type="evidence" value="ECO:0007669"/>
    <property type="project" value="Ensembl"/>
</dbReference>
<dbReference type="GO" id="GO:0048403">
    <property type="term" value="F:brain-derived neurotrophic factor binding"/>
    <property type="evidence" value="ECO:0007669"/>
    <property type="project" value="Ensembl"/>
</dbReference>
<dbReference type="GO" id="GO:0005509">
    <property type="term" value="F:calcium ion binding"/>
    <property type="evidence" value="ECO:0007669"/>
    <property type="project" value="InterPro"/>
</dbReference>
<dbReference type="GO" id="GO:0030154">
    <property type="term" value="P:cell differentiation"/>
    <property type="evidence" value="ECO:0000318"/>
    <property type="project" value="GO_Central"/>
</dbReference>
<dbReference type="GO" id="GO:0031549">
    <property type="term" value="P:negative regulation of brain-derived neurotrophic factor receptor signaling pathway"/>
    <property type="evidence" value="ECO:0007669"/>
    <property type="project" value="Ensembl"/>
</dbReference>
<dbReference type="GO" id="GO:0048671">
    <property type="term" value="P:negative regulation of collateral sprouting"/>
    <property type="evidence" value="ECO:0007669"/>
    <property type="project" value="Ensembl"/>
</dbReference>
<dbReference type="GO" id="GO:0061000">
    <property type="term" value="P:negative regulation of dendritic spine development"/>
    <property type="evidence" value="ECO:0007669"/>
    <property type="project" value="Ensembl"/>
</dbReference>
<dbReference type="GO" id="GO:0030510">
    <property type="term" value="P:regulation of BMP signaling pathway"/>
    <property type="evidence" value="ECO:0000318"/>
    <property type="project" value="GO_Central"/>
</dbReference>
<dbReference type="CDD" id="cd00096">
    <property type="entry name" value="Ig"/>
    <property type="match status" value="1"/>
</dbReference>
<dbReference type="CDD" id="cd05736">
    <property type="entry name" value="IgI_2_Follistatin_like"/>
    <property type="match status" value="1"/>
</dbReference>
<dbReference type="CDD" id="cd00104">
    <property type="entry name" value="KAZAL_FS"/>
    <property type="match status" value="1"/>
</dbReference>
<dbReference type="FunFam" id="1.10.238.10:FF:000307">
    <property type="entry name" value="Follistatin like 4"/>
    <property type="match status" value="1"/>
</dbReference>
<dbReference type="FunFam" id="2.60.40.10:FF:000653">
    <property type="entry name" value="Follistatin like 4"/>
    <property type="match status" value="1"/>
</dbReference>
<dbReference type="FunFam" id="2.60.40.10:FF:002358">
    <property type="entry name" value="Follistatin like 4"/>
    <property type="match status" value="1"/>
</dbReference>
<dbReference type="FunFam" id="3.30.60.30:FF:000007">
    <property type="entry name" value="follistatin-related protein 5 isoform X1"/>
    <property type="match status" value="1"/>
</dbReference>
<dbReference type="Gene3D" id="3.30.60.30">
    <property type="match status" value="1"/>
</dbReference>
<dbReference type="Gene3D" id="1.10.238.10">
    <property type="entry name" value="EF-hand"/>
    <property type="match status" value="1"/>
</dbReference>
<dbReference type="Gene3D" id="2.60.40.10">
    <property type="entry name" value="Immunoglobulins"/>
    <property type="match status" value="2"/>
</dbReference>
<dbReference type="Gene3D" id="2.130.10.10">
    <property type="entry name" value="YVTN repeat-like/Quinoprotein amine dehydrogenase"/>
    <property type="match status" value="1"/>
</dbReference>
<dbReference type="InterPro" id="IPR011992">
    <property type="entry name" value="EF-hand-dom_pair"/>
</dbReference>
<dbReference type="InterPro" id="IPR018247">
    <property type="entry name" value="EF_Hand_1_Ca_BS"/>
</dbReference>
<dbReference type="InterPro" id="IPR002048">
    <property type="entry name" value="EF_hand_dom"/>
</dbReference>
<dbReference type="InterPro" id="IPR007110">
    <property type="entry name" value="Ig-like_dom"/>
</dbReference>
<dbReference type="InterPro" id="IPR036179">
    <property type="entry name" value="Ig-like_dom_sf"/>
</dbReference>
<dbReference type="InterPro" id="IPR013783">
    <property type="entry name" value="Ig-like_fold"/>
</dbReference>
<dbReference type="InterPro" id="IPR003599">
    <property type="entry name" value="Ig_sub"/>
</dbReference>
<dbReference type="InterPro" id="IPR003598">
    <property type="entry name" value="Ig_sub2"/>
</dbReference>
<dbReference type="InterPro" id="IPR002350">
    <property type="entry name" value="Kazal_dom"/>
</dbReference>
<dbReference type="InterPro" id="IPR036058">
    <property type="entry name" value="Kazal_dom_sf"/>
</dbReference>
<dbReference type="InterPro" id="IPR050653">
    <property type="entry name" value="Prot_Inhib_GrowthFact_Antg"/>
</dbReference>
<dbReference type="InterPro" id="IPR015943">
    <property type="entry name" value="WD40/YVTN_repeat-like_dom_sf"/>
</dbReference>
<dbReference type="PANTHER" id="PTHR10913">
    <property type="entry name" value="FOLLISTATIN-RELATED"/>
    <property type="match status" value="1"/>
</dbReference>
<dbReference type="PANTHER" id="PTHR10913:SF9">
    <property type="entry name" value="FOLLISTATIN-RELATED PROTEIN 4"/>
    <property type="match status" value="1"/>
</dbReference>
<dbReference type="Pfam" id="PF13927">
    <property type="entry name" value="Ig_3"/>
    <property type="match status" value="2"/>
</dbReference>
<dbReference type="Pfam" id="PF07648">
    <property type="entry name" value="Kazal_2"/>
    <property type="match status" value="1"/>
</dbReference>
<dbReference type="SMART" id="SM00409">
    <property type="entry name" value="IG"/>
    <property type="match status" value="2"/>
</dbReference>
<dbReference type="SMART" id="SM00408">
    <property type="entry name" value="IGc2"/>
    <property type="match status" value="2"/>
</dbReference>
<dbReference type="SMART" id="SM00280">
    <property type="entry name" value="KAZAL"/>
    <property type="match status" value="1"/>
</dbReference>
<dbReference type="SUPFAM" id="SSF75011">
    <property type="entry name" value="3-carboxy-cis,cis-mucoante lactonizing enzyme"/>
    <property type="match status" value="1"/>
</dbReference>
<dbReference type="SUPFAM" id="SSF47473">
    <property type="entry name" value="EF-hand"/>
    <property type="match status" value="1"/>
</dbReference>
<dbReference type="SUPFAM" id="SSF48726">
    <property type="entry name" value="Immunoglobulin"/>
    <property type="match status" value="2"/>
</dbReference>
<dbReference type="SUPFAM" id="SSF100895">
    <property type="entry name" value="Kazal-type serine protease inhibitors"/>
    <property type="match status" value="1"/>
</dbReference>
<dbReference type="PROSITE" id="PS00018">
    <property type="entry name" value="EF_HAND_1"/>
    <property type="match status" value="1"/>
</dbReference>
<dbReference type="PROSITE" id="PS50222">
    <property type="entry name" value="EF_HAND_2"/>
    <property type="match status" value="1"/>
</dbReference>
<dbReference type="PROSITE" id="PS50835">
    <property type="entry name" value="IG_LIKE"/>
    <property type="match status" value="3"/>
</dbReference>
<dbReference type="PROSITE" id="PS51465">
    <property type="entry name" value="KAZAL_2"/>
    <property type="match status" value="1"/>
</dbReference>
<keyword id="KW-0025">Alternative splicing</keyword>
<keyword id="KW-0106">Calcium</keyword>
<keyword id="KW-1015">Disulfide bond</keyword>
<keyword id="KW-0325">Glycoprotein</keyword>
<keyword id="KW-0393">Immunoglobulin domain</keyword>
<keyword id="KW-0479">Metal-binding</keyword>
<keyword id="KW-1267">Proteomics identification</keyword>
<keyword id="KW-1185">Reference proteome</keyword>
<keyword id="KW-0677">Repeat</keyword>
<keyword id="KW-0964">Secreted</keyword>
<keyword id="KW-0732">Signal</keyword>
<reference key="1">
    <citation type="journal article" date="2007" name="BMC Genomics">
        <title>The full-ORF clone resource of the German cDNA consortium.</title>
        <authorList>
            <person name="Bechtel S."/>
            <person name="Rosenfelder H."/>
            <person name="Duda A."/>
            <person name="Schmidt C.P."/>
            <person name="Ernst U."/>
            <person name="Wellenreuther R."/>
            <person name="Mehrle A."/>
            <person name="Schuster C."/>
            <person name="Bahr A."/>
            <person name="Bloecker H."/>
            <person name="Heubner D."/>
            <person name="Hoerlein A."/>
            <person name="Michel G."/>
            <person name="Wedler H."/>
            <person name="Koehrer K."/>
            <person name="Ottenwaelder B."/>
            <person name="Poustka A."/>
            <person name="Wiemann S."/>
            <person name="Schupp I."/>
        </authorList>
    </citation>
    <scope>NUCLEOTIDE SEQUENCE [LARGE SCALE MRNA] (ISOFORM 2)</scope>
    <scope>VARIANT MET-757</scope>
    <source>
        <tissue>Small intestine</tissue>
    </source>
</reference>
<reference key="2">
    <citation type="journal article" date="2004" name="Nature">
        <title>The DNA sequence and comparative analysis of human chromosome 5.</title>
        <authorList>
            <person name="Schmutz J."/>
            <person name="Martin J."/>
            <person name="Terry A."/>
            <person name="Couronne O."/>
            <person name="Grimwood J."/>
            <person name="Lowry S."/>
            <person name="Gordon L.A."/>
            <person name="Scott D."/>
            <person name="Xie G."/>
            <person name="Huang W."/>
            <person name="Hellsten U."/>
            <person name="Tran-Gyamfi M."/>
            <person name="She X."/>
            <person name="Prabhakar S."/>
            <person name="Aerts A."/>
            <person name="Altherr M."/>
            <person name="Bajorek E."/>
            <person name="Black S."/>
            <person name="Branscomb E."/>
            <person name="Caoile C."/>
            <person name="Challacombe J.F."/>
            <person name="Chan Y.M."/>
            <person name="Denys M."/>
            <person name="Detter J.C."/>
            <person name="Escobar J."/>
            <person name="Flowers D."/>
            <person name="Fotopulos D."/>
            <person name="Glavina T."/>
            <person name="Gomez M."/>
            <person name="Gonzales E."/>
            <person name="Goodstein D."/>
            <person name="Grigoriev I."/>
            <person name="Groza M."/>
            <person name="Hammon N."/>
            <person name="Hawkins T."/>
            <person name="Haydu L."/>
            <person name="Israni S."/>
            <person name="Jett J."/>
            <person name="Kadner K."/>
            <person name="Kimball H."/>
            <person name="Kobayashi A."/>
            <person name="Lopez F."/>
            <person name="Lou Y."/>
            <person name="Martinez D."/>
            <person name="Medina C."/>
            <person name="Morgan J."/>
            <person name="Nandkeshwar R."/>
            <person name="Noonan J.P."/>
            <person name="Pitluck S."/>
            <person name="Pollard M."/>
            <person name="Predki P."/>
            <person name="Priest J."/>
            <person name="Ramirez L."/>
            <person name="Retterer J."/>
            <person name="Rodriguez A."/>
            <person name="Rogers S."/>
            <person name="Salamov A."/>
            <person name="Salazar A."/>
            <person name="Thayer N."/>
            <person name="Tice H."/>
            <person name="Tsai M."/>
            <person name="Ustaszewska A."/>
            <person name="Vo N."/>
            <person name="Wheeler J."/>
            <person name="Wu K."/>
            <person name="Yang J."/>
            <person name="Dickson M."/>
            <person name="Cheng J.-F."/>
            <person name="Eichler E.E."/>
            <person name="Olsen A."/>
            <person name="Pennacchio L.A."/>
            <person name="Rokhsar D.S."/>
            <person name="Richardson P."/>
            <person name="Lucas S.M."/>
            <person name="Myers R.M."/>
            <person name="Rubin E.M."/>
        </authorList>
    </citation>
    <scope>NUCLEOTIDE SEQUENCE [LARGE SCALE GENOMIC DNA]</scope>
</reference>
<reference key="3">
    <citation type="journal article" date="2004" name="Genome Res.">
        <title>The status, quality, and expansion of the NIH full-length cDNA project: the Mammalian Gene Collection (MGC).</title>
        <authorList>
            <consortium name="The MGC Project Team"/>
        </authorList>
    </citation>
    <scope>NUCLEOTIDE SEQUENCE [LARGE SCALE MRNA] (ISOFORM 3)</scope>
    <source>
        <tissue>Lung</tissue>
    </source>
</reference>
<reference key="4">
    <citation type="journal article" date="1999" name="DNA Res.">
        <title>Prediction of the coding sequences of unidentified human genes. XIV. The complete sequences of 100 new cDNA clones from brain which code for large proteins in vitro.</title>
        <authorList>
            <person name="Kikuno R."/>
            <person name="Nagase T."/>
            <person name="Ishikawa K."/>
            <person name="Hirosawa M."/>
            <person name="Miyajima N."/>
            <person name="Tanaka A."/>
            <person name="Kotani H."/>
            <person name="Nomura N."/>
            <person name="Ohara O."/>
        </authorList>
    </citation>
    <scope>NUCLEOTIDE SEQUENCE [LARGE SCALE MRNA] OF 150-842 (ISOFORM 1)</scope>
    <source>
        <tissue>Brain</tissue>
    </source>
</reference>
<reference key="5">
    <citation type="journal article" date="2004" name="BMC Evol. Biol.">
        <title>An enigmatic fourth runt domain gene in the fugu genome: ancestral gene loss versus accelerated evolution.</title>
        <authorList>
            <person name="Glusman G."/>
            <person name="Kaur A."/>
            <person name="Hood L."/>
            <person name="Rowen L."/>
        </authorList>
    </citation>
    <scope>IDENTIFICATION</scope>
</reference>
<comment type="subcellular location">
    <subcellularLocation>
        <location evidence="8">Secreted</location>
    </subcellularLocation>
</comment>
<comment type="alternative products">
    <event type="alternative splicing"/>
    <isoform>
        <id>Q6MZW2-1</id>
        <name>1</name>
        <sequence type="displayed"/>
    </isoform>
    <isoform>
        <id>Q6MZW2-2</id>
        <name>2</name>
        <sequence type="described" ref="VSP_020800"/>
    </isoform>
    <isoform>
        <id>Q6MZW2-3</id>
        <name>3</name>
        <sequence type="described" ref="VSP_020801 VSP_020802"/>
    </isoform>
</comment>
<evidence type="ECO:0000250" key="1"/>
<evidence type="ECO:0000255" key="2"/>
<evidence type="ECO:0000255" key="3">
    <source>
        <dbReference type="PROSITE-ProRule" id="PRU00448"/>
    </source>
</evidence>
<evidence type="ECO:0000255" key="4">
    <source>
        <dbReference type="PROSITE-ProRule" id="PRU00798"/>
    </source>
</evidence>
<evidence type="ECO:0000269" key="5">
    <source>
    </source>
</evidence>
<evidence type="ECO:0000303" key="6">
    <source>
    </source>
</evidence>
<evidence type="ECO:0000303" key="7">
    <source>
    </source>
</evidence>
<evidence type="ECO:0000305" key="8"/>
<gene>
    <name type="primary">FSTL4</name>
    <name type="synonym">KIAA1061</name>
</gene>
<sequence length="842" mass="93096">MKPGGFWLHLTLLGASLPAALGWMDPGTSRGPDVGVGESQAEEPRSFEVTRREGLSSHNELLASCGKKFCSRGSRCVLSRKTGEPECQCLEACRPSYVPVCGSDGRFYENHCKLHRAACLLGKRITVIHSKDCFLKGDTCTMAGYARLKNVLLALQTRLQPLQEGDSRQDPASQKRLLVESLFRDLDADGNGHLSSSELAQHVLKKQDLDEDLLGCSPGDLLRFDDYNSDSSLTLREFYMAFQVVQLSLAPEDRVSVTTVTVGLSTVLTCAVHGDLRPPIIWKRNGLTLNFLDLEDINDFGEDDSLYITKVTTIHMGNYTCHASGHEQLFQTHVLQVNVPPVIRVYPESQAQEPGVAASLRCHAEGIPMPRITWLKNGVDVSTQMSKQLSLLANGSELHISSVRYEDTGAYTCIAKNEVGVDEDISSLFIEDSARKTLANILWREEGLSVGNMFYVFSDDGIIVIHPVDCEIQRHLKPTEKIFMSYEEICPQREKNATQPCQWVSAVNVRNRYIYVAQPALSRVLVVDIQAQKVLQSIGVDPLPAKLSYDKSHDQVWVLSWGDVHKSRPSLQVITEASTGQSQHLIRTPFAGVDDFFIPPTNLIINHIRFGFIFNKSDPAVHKVDLETMMPLKTIGLHHHGCVPQAMAHTHLGGYFFIQCRQDSPASAARQLLVDSVTDSVLGPNGDVTGTPHTSPDGRFIVSAAADSPWLHVQEITVRGEIQTLYDLQINSGISDLAFQRSFTESNQYNIYAALHTEPDLLFLELSTGKVGMLKNLKEPPAGPAQPWGGTHRIMRDSGLFGQYLLTPARESLFLINGRQNTLRCEVSGIKGGTTVVWVGEV</sequence>